<keyword id="KW-0687">Ribonucleoprotein</keyword>
<keyword id="KW-0689">Ribosomal protein</keyword>
<keyword id="KW-0694">RNA-binding</keyword>
<keyword id="KW-0699">rRNA-binding</keyword>
<evidence type="ECO:0000255" key="1">
    <source>
        <dbReference type="HAMAP-Rule" id="MF_01326"/>
    </source>
</evidence>
<evidence type="ECO:0000305" key="2"/>
<sequence>MAAKIRRDDEVIVLTGKDKGKRGKVKNVLSSGKVIVEGINLVKKHQKPVPALNQPGGIVEKEAAIQVSNVAIFNAATGKADRVGFRFEDGKKVRFFKSNSETIK</sequence>
<proteinExistence type="inferred from homology"/>
<gene>
    <name evidence="1" type="primary">rplX</name>
    <name type="ordered locus">SG4010</name>
</gene>
<feature type="chain" id="PRO_1000142034" description="Large ribosomal subunit protein uL24">
    <location>
        <begin position="1"/>
        <end position="104"/>
    </location>
</feature>
<protein>
    <recommendedName>
        <fullName evidence="1">Large ribosomal subunit protein uL24</fullName>
    </recommendedName>
    <alternativeName>
        <fullName evidence="2">50S ribosomal protein L24</fullName>
    </alternativeName>
</protein>
<comment type="function">
    <text evidence="1">One of two assembly initiator proteins, it binds directly to the 5'-end of the 23S rRNA, where it nucleates assembly of the 50S subunit.</text>
</comment>
<comment type="function">
    <text evidence="1">One of the proteins that surrounds the polypeptide exit tunnel on the outside of the subunit.</text>
</comment>
<comment type="subunit">
    <text evidence="1">Part of the 50S ribosomal subunit.</text>
</comment>
<comment type="similarity">
    <text evidence="1">Belongs to the universal ribosomal protein uL24 family.</text>
</comment>
<accession>B5RH26</accession>
<name>RL24_SALG2</name>
<dbReference type="EMBL" id="AM933173">
    <property type="protein sequence ID" value="CAR39780.1"/>
    <property type="molecule type" value="Genomic_DNA"/>
</dbReference>
<dbReference type="RefSeq" id="WP_000729185.1">
    <property type="nucleotide sequence ID" value="NC_011274.1"/>
</dbReference>
<dbReference type="SMR" id="B5RH26"/>
<dbReference type="GeneID" id="93778678"/>
<dbReference type="KEGG" id="seg:SG4010"/>
<dbReference type="HOGENOM" id="CLU_093315_2_2_6"/>
<dbReference type="Proteomes" id="UP000008321">
    <property type="component" value="Chromosome"/>
</dbReference>
<dbReference type="GO" id="GO:0005829">
    <property type="term" value="C:cytosol"/>
    <property type="evidence" value="ECO:0007669"/>
    <property type="project" value="UniProtKB-ARBA"/>
</dbReference>
<dbReference type="GO" id="GO:1990904">
    <property type="term" value="C:ribonucleoprotein complex"/>
    <property type="evidence" value="ECO:0007669"/>
    <property type="project" value="UniProtKB-KW"/>
</dbReference>
<dbReference type="GO" id="GO:0005840">
    <property type="term" value="C:ribosome"/>
    <property type="evidence" value="ECO:0007669"/>
    <property type="project" value="UniProtKB-KW"/>
</dbReference>
<dbReference type="GO" id="GO:0019843">
    <property type="term" value="F:rRNA binding"/>
    <property type="evidence" value="ECO:0007669"/>
    <property type="project" value="UniProtKB-UniRule"/>
</dbReference>
<dbReference type="GO" id="GO:0003735">
    <property type="term" value="F:structural constituent of ribosome"/>
    <property type="evidence" value="ECO:0007669"/>
    <property type="project" value="InterPro"/>
</dbReference>
<dbReference type="GO" id="GO:0006412">
    <property type="term" value="P:translation"/>
    <property type="evidence" value="ECO:0007669"/>
    <property type="project" value="UniProtKB-UniRule"/>
</dbReference>
<dbReference type="CDD" id="cd06089">
    <property type="entry name" value="KOW_RPL26"/>
    <property type="match status" value="1"/>
</dbReference>
<dbReference type="FunFam" id="2.30.30.30:FF:000004">
    <property type="entry name" value="50S ribosomal protein L24"/>
    <property type="match status" value="1"/>
</dbReference>
<dbReference type="Gene3D" id="2.30.30.30">
    <property type="match status" value="1"/>
</dbReference>
<dbReference type="HAMAP" id="MF_01326_B">
    <property type="entry name" value="Ribosomal_uL24_B"/>
    <property type="match status" value="1"/>
</dbReference>
<dbReference type="InterPro" id="IPR005824">
    <property type="entry name" value="KOW"/>
</dbReference>
<dbReference type="InterPro" id="IPR014722">
    <property type="entry name" value="Rib_uL2_dom2"/>
</dbReference>
<dbReference type="InterPro" id="IPR003256">
    <property type="entry name" value="Ribosomal_uL24"/>
</dbReference>
<dbReference type="InterPro" id="IPR005825">
    <property type="entry name" value="Ribosomal_uL24_CS"/>
</dbReference>
<dbReference type="InterPro" id="IPR041988">
    <property type="entry name" value="Ribosomal_uL24_KOW"/>
</dbReference>
<dbReference type="InterPro" id="IPR008991">
    <property type="entry name" value="Translation_prot_SH3-like_sf"/>
</dbReference>
<dbReference type="NCBIfam" id="TIGR01079">
    <property type="entry name" value="rplX_bact"/>
    <property type="match status" value="1"/>
</dbReference>
<dbReference type="PANTHER" id="PTHR12903">
    <property type="entry name" value="MITOCHONDRIAL RIBOSOMAL PROTEIN L24"/>
    <property type="match status" value="1"/>
</dbReference>
<dbReference type="Pfam" id="PF00467">
    <property type="entry name" value="KOW"/>
    <property type="match status" value="1"/>
</dbReference>
<dbReference type="Pfam" id="PF17136">
    <property type="entry name" value="ribosomal_L24"/>
    <property type="match status" value="1"/>
</dbReference>
<dbReference type="SMART" id="SM00739">
    <property type="entry name" value="KOW"/>
    <property type="match status" value="1"/>
</dbReference>
<dbReference type="SUPFAM" id="SSF50104">
    <property type="entry name" value="Translation proteins SH3-like domain"/>
    <property type="match status" value="1"/>
</dbReference>
<dbReference type="PROSITE" id="PS01108">
    <property type="entry name" value="RIBOSOMAL_L24"/>
    <property type="match status" value="1"/>
</dbReference>
<reference key="1">
    <citation type="journal article" date="2008" name="Genome Res.">
        <title>Comparative genome analysis of Salmonella enteritidis PT4 and Salmonella gallinarum 287/91 provides insights into evolutionary and host adaptation pathways.</title>
        <authorList>
            <person name="Thomson N.R."/>
            <person name="Clayton D.J."/>
            <person name="Windhorst D."/>
            <person name="Vernikos G."/>
            <person name="Davidson S."/>
            <person name="Churcher C."/>
            <person name="Quail M.A."/>
            <person name="Stevens M."/>
            <person name="Jones M.A."/>
            <person name="Watson M."/>
            <person name="Barron A."/>
            <person name="Layton A."/>
            <person name="Pickard D."/>
            <person name="Kingsley R.A."/>
            <person name="Bignell A."/>
            <person name="Clark L."/>
            <person name="Harris B."/>
            <person name="Ormond D."/>
            <person name="Abdellah Z."/>
            <person name="Brooks K."/>
            <person name="Cherevach I."/>
            <person name="Chillingworth T."/>
            <person name="Woodward J."/>
            <person name="Norberczak H."/>
            <person name="Lord A."/>
            <person name="Arrowsmith C."/>
            <person name="Jagels K."/>
            <person name="Moule S."/>
            <person name="Mungall K."/>
            <person name="Saunders M."/>
            <person name="Whitehead S."/>
            <person name="Chabalgoity J.A."/>
            <person name="Maskell D."/>
            <person name="Humphreys T."/>
            <person name="Roberts M."/>
            <person name="Barrow P.A."/>
            <person name="Dougan G."/>
            <person name="Parkhill J."/>
        </authorList>
    </citation>
    <scope>NUCLEOTIDE SEQUENCE [LARGE SCALE GENOMIC DNA]</scope>
    <source>
        <strain>287/91 / NCTC 13346</strain>
    </source>
</reference>
<organism>
    <name type="scientific">Salmonella gallinarum (strain 287/91 / NCTC 13346)</name>
    <dbReference type="NCBI Taxonomy" id="550538"/>
    <lineage>
        <taxon>Bacteria</taxon>
        <taxon>Pseudomonadati</taxon>
        <taxon>Pseudomonadota</taxon>
        <taxon>Gammaproteobacteria</taxon>
        <taxon>Enterobacterales</taxon>
        <taxon>Enterobacteriaceae</taxon>
        <taxon>Salmonella</taxon>
    </lineage>
</organism>